<gene>
    <name evidence="1" type="primary">minE</name>
    <name type="ordered locus">CYB_0318</name>
</gene>
<name>MINE_SYNJB</name>
<reference key="1">
    <citation type="journal article" date="2007" name="ISME J.">
        <title>Population level functional diversity in a microbial community revealed by comparative genomic and metagenomic analyses.</title>
        <authorList>
            <person name="Bhaya D."/>
            <person name="Grossman A.R."/>
            <person name="Steunou A.-S."/>
            <person name="Khuri N."/>
            <person name="Cohan F.M."/>
            <person name="Hamamura N."/>
            <person name="Melendrez M.C."/>
            <person name="Bateson M.M."/>
            <person name="Ward D.M."/>
            <person name="Heidelberg J.F."/>
        </authorList>
    </citation>
    <scope>NUCLEOTIDE SEQUENCE [LARGE SCALE GENOMIC DNA]</scope>
    <source>
        <strain>JA-2-3B'a(2-13)</strain>
    </source>
</reference>
<evidence type="ECO:0000255" key="1">
    <source>
        <dbReference type="HAMAP-Rule" id="MF_00262"/>
    </source>
</evidence>
<organism>
    <name type="scientific">Synechococcus sp. (strain JA-2-3B'a(2-13))</name>
    <name type="common">Cyanobacteria bacterium Yellowstone B-Prime</name>
    <dbReference type="NCBI Taxonomy" id="321332"/>
    <lineage>
        <taxon>Bacteria</taxon>
        <taxon>Bacillati</taxon>
        <taxon>Cyanobacteriota</taxon>
        <taxon>Cyanophyceae</taxon>
        <taxon>Synechococcales</taxon>
        <taxon>Synechococcaceae</taxon>
        <taxon>Synechococcus</taxon>
    </lineage>
</organism>
<proteinExistence type="inferred from homology"/>
<keyword id="KW-0131">Cell cycle</keyword>
<keyword id="KW-0132">Cell division</keyword>
<keyword id="KW-1185">Reference proteome</keyword>
<dbReference type="EMBL" id="CP000240">
    <property type="protein sequence ID" value="ABD01316.1"/>
    <property type="molecule type" value="Genomic_DNA"/>
</dbReference>
<dbReference type="RefSeq" id="WP_011431985.1">
    <property type="nucleotide sequence ID" value="NC_007776.1"/>
</dbReference>
<dbReference type="SMR" id="Q2JPH1"/>
<dbReference type="STRING" id="321332.CYB_0318"/>
<dbReference type="KEGG" id="cyb:CYB_0318"/>
<dbReference type="eggNOG" id="COG0851">
    <property type="taxonomic scope" value="Bacteria"/>
</dbReference>
<dbReference type="HOGENOM" id="CLU_137929_1_1_3"/>
<dbReference type="OrthoDB" id="9796578at2"/>
<dbReference type="Proteomes" id="UP000001938">
    <property type="component" value="Chromosome"/>
</dbReference>
<dbReference type="GO" id="GO:0051301">
    <property type="term" value="P:cell division"/>
    <property type="evidence" value="ECO:0007669"/>
    <property type="project" value="UniProtKB-KW"/>
</dbReference>
<dbReference type="GO" id="GO:0032955">
    <property type="term" value="P:regulation of division septum assembly"/>
    <property type="evidence" value="ECO:0007669"/>
    <property type="project" value="InterPro"/>
</dbReference>
<dbReference type="Gene3D" id="3.30.1070.10">
    <property type="entry name" value="Cell division topological specificity factor MinE"/>
    <property type="match status" value="1"/>
</dbReference>
<dbReference type="HAMAP" id="MF_00262">
    <property type="entry name" value="MinE"/>
    <property type="match status" value="1"/>
</dbReference>
<dbReference type="InterPro" id="IPR005527">
    <property type="entry name" value="MinE"/>
</dbReference>
<dbReference type="InterPro" id="IPR036707">
    <property type="entry name" value="MinE_sf"/>
</dbReference>
<dbReference type="NCBIfam" id="TIGR01215">
    <property type="entry name" value="minE"/>
    <property type="match status" value="1"/>
</dbReference>
<dbReference type="Pfam" id="PF03776">
    <property type="entry name" value="MinE"/>
    <property type="match status" value="1"/>
</dbReference>
<dbReference type="SUPFAM" id="SSF55229">
    <property type="entry name" value="Cell division protein MinE topological specificity domain"/>
    <property type="match status" value="1"/>
</dbReference>
<protein>
    <recommendedName>
        <fullName evidence="1">Cell division topological specificity factor</fullName>
    </recommendedName>
</protein>
<feature type="chain" id="PRO_0000298200" description="Cell division topological specificity factor">
    <location>
        <begin position="1"/>
        <end position="100"/>
    </location>
</feature>
<sequence length="100" mass="11129">MLLDFLDQLFSRHSGNSRQQAKQRLKLILAHDRADLTPAALESMRLEILGVVSRYVELDSEGMQFHLATEGGTTALIANLPIRRVKPLETGLSRSEGEKA</sequence>
<accession>Q2JPH1</accession>
<comment type="function">
    <text evidence="1">Prevents the cell division inhibition by proteins MinC and MinD at internal division sites while permitting inhibition at polar sites. This ensures cell division at the proper site by restricting the formation of a division septum at the midpoint of the long axis of the cell.</text>
</comment>
<comment type="similarity">
    <text evidence="1">Belongs to the MinE family.</text>
</comment>